<protein>
    <recommendedName>
        <fullName evidence="1">Lipoprotein-releasing system ATP-binding protein LolD</fullName>
        <ecNumber evidence="1">7.6.2.-</ecNumber>
    </recommendedName>
</protein>
<accession>P0DJA1</accession>
<accession>P74997</accession>
<accession>Q5NQC3</accession>
<name>LOLD_ZYMMO</name>
<organism>
    <name type="scientific">Zymomonas mobilis subsp. mobilis (strain ATCC 31821 / ZM4 / CP4)</name>
    <dbReference type="NCBI Taxonomy" id="264203"/>
    <lineage>
        <taxon>Bacteria</taxon>
        <taxon>Pseudomonadati</taxon>
        <taxon>Pseudomonadota</taxon>
        <taxon>Alphaproteobacteria</taxon>
        <taxon>Sphingomonadales</taxon>
        <taxon>Zymomonadaceae</taxon>
        <taxon>Zymomonas</taxon>
    </lineage>
</organism>
<dbReference type="EC" id="7.6.2.-" evidence="1"/>
<dbReference type="EMBL" id="AE008692">
    <property type="protein sequence ID" value="AAV89082.1"/>
    <property type="molecule type" value="Genomic_DNA"/>
</dbReference>
<dbReference type="RefSeq" id="WP_011240367.1">
    <property type="nucleotide sequence ID" value="NZ_CP035711.1"/>
</dbReference>
<dbReference type="SMR" id="P0DJA1"/>
<dbReference type="STRING" id="264203.ZMO0458"/>
<dbReference type="KEGG" id="zmo:ZMO0458"/>
<dbReference type="eggNOG" id="COG1136">
    <property type="taxonomic scope" value="Bacteria"/>
</dbReference>
<dbReference type="HOGENOM" id="CLU_000604_1_22_5"/>
<dbReference type="Proteomes" id="UP000001173">
    <property type="component" value="Chromosome"/>
</dbReference>
<dbReference type="GO" id="GO:0005886">
    <property type="term" value="C:plasma membrane"/>
    <property type="evidence" value="ECO:0007669"/>
    <property type="project" value="UniProtKB-SubCell"/>
</dbReference>
<dbReference type="GO" id="GO:0005524">
    <property type="term" value="F:ATP binding"/>
    <property type="evidence" value="ECO:0007669"/>
    <property type="project" value="UniProtKB-KW"/>
</dbReference>
<dbReference type="GO" id="GO:0016887">
    <property type="term" value="F:ATP hydrolysis activity"/>
    <property type="evidence" value="ECO:0007669"/>
    <property type="project" value="InterPro"/>
</dbReference>
<dbReference type="GO" id="GO:0022857">
    <property type="term" value="F:transmembrane transporter activity"/>
    <property type="evidence" value="ECO:0007669"/>
    <property type="project" value="TreeGrafter"/>
</dbReference>
<dbReference type="GO" id="GO:0044874">
    <property type="term" value="P:lipoprotein localization to outer membrane"/>
    <property type="evidence" value="ECO:0007669"/>
    <property type="project" value="TreeGrafter"/>
</dbReference>
<dbReference type="GO" id="GO:0089705">
    <property type="term" value="P:protein localization to outer membrane"/>
    <property type="evidence" value="ECO:0007669"/>
    <property type="project" value="TreeGrafter"/>
</dbReference>
<dbReference type="CDD" id="cd03255">
    <property type="entry name" value="ABC_MJ0796_LolCDE_FtsE"/>
    <property type="match status" value="1"/>
</dbReference>
<dbReference type="FunFam" id="3.40.50.300:FF:000032">
    <property type="entry name" value="Export ABC transporter ATP-binding protein"/>
    <property type="match status" value="1"/>
</dbReference>
<dbReference type="Gene3D" id="3.40.50.300">
    <property type="entry name" value="P-loop containing nucleotide triphosphate hydrolases"/>
    <property type="match status" value="1"/>
</dbReference>
<dbReference type="InterPro" id="IPR003593">
    <property type="entry name" value="AAA+_ATPase"/>
</dbReference>
<dbReference type="InterPro" id="IPR003439">
    <property type="entry name" value="ABC_transporter-like_ATP-bd"/>
</dbReference>
<dbReference type="InterPro" id="IPR017871">
    <property type="entry name" value="ABC_transporter-like_CS"/>
</dbReference>
<dbReference type="InterPro" id="IPR015854">
    <property type="entry name" value="ABC_transpr_LolD-like"/>
</dbReference>
<dbReference type="InterPro" id="IPR017911">
    <property type="entry name" value="MacB-like_ATP-bd"/>
</dbReference>
<dbReference type="InterPro" id="IPR027417">
    <property type="entry name" value="P-loop_NTPase"/>
</dbReference>
<dbReference type="PANTHER" id="PTHR24220">
    <property type="entry name" value="IMPORT ATP-BINDING PROTEIN"/>
    <property type="match status" value="1"/>
</dbReference>
<dbReference type="PANTHER" id="PTHR24220:SF689">
    <property type="entry name" value="LIPOPROTEIN-RELEASING SYSTEM ATP-BINDING PROTEIN LOLD"/>
    <property type="match status" value="1"/>
</dbReference>
<dbReference type="Pfam" id="PF00005">
    <property type="entry name" value="ABC_tran"/>
    <property type="match status" value="1"/>
</dbReference>
<dbReference type="SMART" id="SM00382">
    <property type="entry name" value="AAA"/>
    <property type="match status" value="1"/>
</dbReference>
<dbReference type="SUPFAM" id="SSF52540">
    <property type="entry name" value="P-loop containing nucleoside triphosphate hydrolases"/>
    <property type="match status" value="1"/>
</dbReference>
<dbReference type="PROSITE" id="PS00211">
    <property type="entry name" value="ABC_TRANSPORTER_1"/>
    <property type="match status" value="1"/>
</dbReference>
<dbReference type="PROSITE" id="PS50893">
    <property type="entry name" value="ABC_TRANSPORTER_2"/>
    <property type="match status" value="1"/>
</dbReference>
<dbReference type="PROSITE" id="PS51244">
    <property type="entry name" value="LOLD"/>
    <property type="match status" value="1"/>
</dbReference>
<reference key="1">
    <citation type="journal article" date="2005" name="Nat. Biotechnol.">
        <title>The genome sequence of the ethanologenic bacterium Zymomonas mobilis ZM4.</title>
        <authorList>
            <person name="Seo J.-S."/>
            <person name="Chong H."/>
            <person name="Park H.S."/>
            <person name="Yoon K.-O."/>
            <person name="Jung C."/>
            <person name="Kim J.J."/>
            <person name="Hong J.H."/>
            <person name="Kim H."/>
            <person name="Kim J.-H."/>
            <person name="Kil J.-I."/>
            <person name="Park C.J."/>
            <person name="Oh H.-M."/>
            <person name="Lee J.-S."/>
            <person name="Jin S.-J."/>
            <person name="Um H.-W."/>
            <person name="Lee H.-J."/>
            <person name="Oh S.-J."/>
            <person name="Kim J.Y."/>
            <person name="Kang H.L."/>
            <person name="Lee S.Y."/>
            <person name="Lee K.J."/>
            <person name="Kang H.S."/>
        </authorList>
    </citation>
    <scope>NUCLEOTIDE SEQUENCE [LARGE SCALE GENOMIC DNA]</scope>
    <source>
        <strain>ATCC 31821 / ZM4 / CP4</strain>
    </source>
</reference>
<sequence>MNSPLSYNNVIEVTDLQRAFKQGEHEIQILRGIDLIVRRGEILALLGPSGAGKSTFLQAIGLLENGFTGSINILGQEIGSLNDKERTAIRRDHLGFVYQFHHLLPDFSALENVMLPQLIQGKSPHQAKEHAHFLLNSLKLEERLKHYPSQLSGGEQQRVAVARALANRPALVLADEPTGNLDEATGDIVLHEFLRLVRRQGSAAIIATHNMAMARKMDRIVTLHDGRLIEEY</sequence>
<proteinExistence type="inferred from homology"/>
<evidence type="ECO:0000255" key="1">
    <source>
        <dbReference type="HAMAP-Rule" id="MF_01708"/>
    </source>
</evidence>
<keyword id="KW-0067">ATP-binding</keyword>
<keyword id="KW-0997">Cell inner membrane</keyword>
<keyword id="KW-1003">Cell membrane</keyword>
<keyword id="KW-0472">Membrane</keyword>
<keyword id="KW-0547">Nucleotide-binding</keyword>
<keyword id="KW-1185">Reference proteome</keyword>
<keyword id="KW-1278">Translocase</keyword>
<keyword id="KW-0813">Transport</keyword>
<feature type="chain" id="PRO_0000092473" description="Lipoprotein-releasing system ATP-binding protein LolD">
    <location>
        <begin position="1"/>
        <end position="232"/>
    </location>
</feature>
<feature type="domain" description="ABC transporter" evidence="1">
    <location>
        <begin position="11"/>
        <end position="232"/>
    </location>
</feature>
<feature type="binding site" evidence="1">
    <location>
        <begin position="47"/>
        <end position="54"/>
    </location>
    <ligand>
        <name>ATP</name>
        <dbReference type="ChEBI" id="CHEBI:30616"/>
    </ligand>
</feature>
<comment type="function">
    <text evidence="1">Part of the ABC transporter complex LolCDE involved in the translocation of mature outer membrane-directed lipoproteins, from the inner membrane to the periplasmic chaperone, LolA. Responsible for the formation of the LolA-lipoprotein complex in an ATP-dependent manner.</text>
</comment>
<comment type="subunit">
    <text evidence="1">The complex is composed of two ATP-binding proteins (LolD) and two transmembrane proteins (LolC and LolE).</text>
</comment>
<comment type="subcellular location">
    <subcellularLocation>
        <location evidence="1">Cell inner membrane</location>
        <topology evidence="1">Peripheral membrane protein</topology>
    </subcellularLocation>
</comment>
<comment type="similarity">
    <text evidence="1">Belongs to the ABC transporter superfamily. Lipoprotein translocase (TC 3.A.1.125) family.</text>
</comment>
<gene>
    <name evidence="1" type="primary">lolD</name>
    <name type="ordered locus">ZMO0458</name>
</gene>